<keyword id="KW-0997">Cell inner membrane</keyword>
<keyword id="KW-1003">Cell membrane</keyword>
<keyword id="KW-0472">Membrane</keyword>
<keyword id="KW-1185">Reference proteome</keyword>
<keyword id="KW-0808">Transferase</keyword>
<keyword id="KW-0812">Transmembrane</keyword>
<keyword id="KW-1133">Transmembrane helix</keyword>
<organism>
    <name type="scientific">Methylobacillus flagellatus (strain ATCC 51484 / DSM 6875 / VKM B-1610 / KT)</name>
    <dbReference type="NCBI Taxonomy" id="265072"/>
    <lineage>
        <taxon>Bacteria</taxon>
        <taxon>Pseudomonadati</taxon>
        <taxon>Pseudomonadota</taxon>
        <taxon>Betaproteobacteria</taxon>
        <taxon>Nitrosomonadales</taxon>
        <taxon>Methylophilaceae</taxon>
        <taxon>Methylobacillus</taxon>
    </lineage>
</organism>
<reference key="1">
    <citation type="submission" date="2006-03" db="EMBL/GenBank/DDBJ databases">
        <title>Complete sequence of Methylobacillus flagellatus KT.</title>
        <authorList>
            <consortium name="US DOE Joint Genome Institute"/>
            <person name="Copeland A."/>
            <person name="Lucas S."/>
            <person name="Lapidus A."/>
            <person name="Barry K."/>
            <person name="Detter J.C."/>
            <person name="Glavina del Rio T."/>
            <person name="Hammon N."/>
            <person name="Israni S."/>
            <person name="Dalin E."/>
            <person name="Tice H."/>
            <person name="Pitluck S."/>
            <person name="Brettin T."/>
            <person name="Bruce D."/>
            <person name="Han C."/>
            <person name="Tapia R."/>
            <person name="Saunders E."/>
            <person name="Gilna P."/>
            <person name="Schmutz J."/>
            <person name="Larimer F."/>
            <person name="Land M."/>
            <person name="Kyrpides N."/>
            <person name="Anderson I."/>
            <person name="Richardson P."/>
        </authorList>
    </citation>
    <scope>NUCLEOTIDE SEQUENCE [LARGE SCALE GENOMIC DNA]</scope>
    <source>
        <strain>ATCC 51484 / DSM 6875 / VKM B-1610 / KT</strain>
    </source>
</reference>
<accession>Q1H4H7</accession>
<comment type="function">
    <text evidence="1">Catalyzes the transfer of the diacylglyceryl group from phosphatidylglycerol to the sulfhydryl group of the N-terminal cysteine of a prolipoprotein, the first step in the formation of mature lipoproteins.</text>
</comment>
<comment type="catalytic activity">
    <reaction evidence="1">
        <text>L-cysteinyl-[prolipoprotein] + a 1,2-diacyl-sn-glycero-3-phospho-(1'-sn-glycerol) = an S-1,2-diacyl-sn-glyceryl-L-cysteinyl-[prolipoprotein] + sn-glycerol 1-phosphate + H(+)</text>
        <dbReference type="Rhea" id="RHEA:56712"/>
        <dbReference type="Rhea" id="RHEA-COMP:14679"/>
        <dbReference type="Rhea" id="RHEA-COMP:14680"/>
        <dbReference type="ChEBI" id="CHEBI:15378"/>
        <dbReference type="ChEBI" id="CHEBI:29950"/>
        <dbReference type="ChEBI" id="CHEBI:57685"/>
        <dbReference type="ChEBI" id="CHEBI:64716"/>
        <dbReference type="ChEBI" id="CHEBI:140658"/>
        <dbReference type="EC" id="2.5.1.145"/>
    </reaction>
</comment>
<comment type="pathway">
    <text evidence="1">Protein modification; lipoprotein biosynthesis (diacylglyceryl transfer).</text>
</comment>
<comment type="subcellular location">
    <subcellularLocation>
        <location evidence="1">Cell inner membrane</location>
        <topology evidence="1">Multi-pass membrane protein</topology>
    </subcellularLocation>
</comment>
<comment type="similarity">
    <text evidence="1">Belongs to the Lgt family.</text>
</comment>
<name>LGT_METFK</name>
<gene>
    <name evidence="1" type="primary">lgt</name>
    <name type="ordered locus">Mfla_0339</name>
</gene>
<evidence type="ECO:0000255" key="1">
    <source>
        <dbReference type="HAMAP-Rule" id="MF_01147"/>
    </source>
</evidence>
<proteinExistence type="inferred from homology"/>
<feature type="chain" id="PRO_1000053452" description="Phosphatidylglycerol--prolipoprotein diacylglyceryl transferase">
    <location>
        <begin position="1"/>
        <end position="261"/>
    </location>
</feature>
<feature type="transmembrane region" description="Helical" evidence="1">
    <location>
        <begin position="17"/>
        <end position="37"/>
    </location>
</feature>
<feature type="transmembrane region" description="Helical" evidence="1">
    <location>
        <begin position="60"/>
        <end position="80"/>
    </location>
</feature>
<feature type="transmembrane region" description="Helical" evidence="1">
    <location>
        <begin position="92"/>
        <end position="112"/>
    </location>
</feature>
<feature type="transmembrane region" description="Helical" evidence="1">
    <location>
        <begin position="121"/>
        <end position="141"/>
    </location>
</feature>
<feature type="transmembrane region" description="Helical" evidence="1">
    <location>
        <begin position="175"/>
        <end position="195"/>
    </location>
</feature>
<feature type="transmembrane region" description="Helical" evidence="1">
    <location>
        <begin position="203"/>
        <end position="223"/>
    </location>
</feature>
<feature type="transmembrane region" description="Helical" evidence="1">
    <location>
        <begin position="237"/>
        <end position="257"/>
    </location>
</feature>
<feature type="binding site" evidence="1">
    <location>
        <position position="143"/>
    </location>
    <ligand>
        <name>a 1,2-diacyl-sn-glycero-3-phospho-(1'-sn-glycerol)</name>
        <dbReference type="ChEBI" id="CHEBI:64716"/>
    </ligand>
</feature>
<protein>
    <recommendedName>
        <fullName evidence="1">Phosphatidylglycerol--prolipoprotein diacylglyceryl transferase</fullName>
        <ecNumber evidence="1">2.5.1.145</ecNumber>
    </recommendedName>
</protein>
<dbReference type="EC" id="2.5.1.145" evidence="1"/>
<dbReference type="EMBL" id="CP000284">
    <property type="protein sequence ID" value="ABE48610.1"/>
    <property type="molecule type" value="Genomic_DNA"/>
</dbReference>
<dbReference type="RefSeq" id="WP_011478707.1">
    <property type="nucleotide sequence ID" value="NC_007947.1"/>
</dbReference>
<dbReference type="SMR" id="Q1H4H7"/>
<dbReference type="STRING" id="265072.Mfla_0339"/>
<dbReference type="KEGG" id="mfa:Mfla_0339"/>
<dbReference type="eggNOG" id="COG0682">
    <property type="taxonomic scope" value="Bacteria"/>
</dbReference>
<dbReference type="HOGENOM" id="CLU_013386_1_0_4"/>
<dbReference type="OrthoDB" id="871140at2"/>
<dbReference type="UniPathway" id="UPA00664"/>
<dbReference type="Proteomes" id="UP000002440">
    <property type="component" value="Chromosome"/>
</dbReference>
<dbReference type="GO" id="GO:0005886">
    <property type="term" value="C:plasma membrane"/>
    <property type="evidence" value="ECO:0007669"/>
    <property type="project" value="UniProtKB-SubCell"/>
</dbReference>
<dbReference type="GO" id="GO:0008961">
    <property type="term" value="F:phosphatidylglycerol-prolipoprotein diacylglyceryl transferase activity"/>
    <property type="evidence" value="ECO:0007669"/>
    <property type="project" value="UniProtKB-UniRule"/>
</dbReference>
<dbReference type="GO" id="GO:0042158">
    <property type="term" value="P:lipoprotein biosynthetic process"/>
    <property type="evidence" value="ECO:0007669"/>
    <property type="project" value="UniProtKB-UniRule"/>
</dbReference>
<dbReference type="HAMAP" id="MF_01147">
    <property type="entry name" value="Lgt"/>
    <property type="match status" value="1"/>
</dbReference>
<dbReference type="InterPro" id="IPR001640">
    <property type="entry name" value="Lgt"/>
</dbReference>
<dbReference type="NCBIfam" id="TIGR00544">
    <property type="entry name" value="lgt"/>
    <property type="match status" value="1"/>
</dbReference>
<dbReference type="PANTHER" id="PTHR30589:SF0">
    <property type="entry name" value="PHOSPHATIDYLGLYCEROL--PROLIPOPROTEIN DIACYLGLYCERYL TRANSFERASE"/>
    <property type="match status" value="1"/>
</dbReference>
<dbReference type="PANTHER" id="PTHR30589">
    <property type="entry name" value="PROLIPOPROTEIN DIACYLGLYCERYL TRANSFERASE"/>
    <property type="match status" value="1"/>
</dbReference>
<dbReference type="Pfam" id="PF01790">
    <property type="entry name" value="LGT"/>
    <property type="match status" value="1"/>
</dbReference>
<dbReference type="PROSITE" id="PS01311">
    <property type="entry name" value="LGT"/>
    <property type="match status" value="1"/>
</dbReference>
<sequence length="261" mass="29601">MLVHPQFDPVAIHLGSFGIHWYGLMYLIGFLAFLWLGRWRIAHQPWWGKAGWTKKNLDDALFYGALGVILGGRLGYALFYQHEYYLTHPHEILFLWQGGMSFHGGFLGVMVAMLLFAKRRGLTFFGIMDFVAPLVPVGLGAGRMGNFINGELWGRASDLPWAMVFPHVDSIARHPSQLYEFLLEGVALFILLWWYSSKPRARGSVSALFLIGYGSFRFLVEFTREPDSFLGLLSLGLSMGQWLSLPMVIAGVWLLIVSLRR</sequence>